<protein>
    <recommendedName>
        <fullName>Chemerin-like receptor 2</fullName>
    </recommendedName>
    <alternativeName>
        <fullName>Chemerin chemokine-like receptor 2</fullName>
    </alternativeName>
    <alternativeName>
        <fullName>Chemokine-like receptor 2</fullName>
    </alternativeName>
    <alternativeName>
        <fullName>G-protein coupled receptor 1</fullName>
    </alternativeName>
</protein>
<reference key="1">
    <citation type="journal article" date="2009" name="PLoS Biol.">
        <title>Lineage-specific biology revealed by a finished genome assembly of the mouse.</title>
        <authorList>
            <person name="Church D.M."/>
            <person name="Goodstadt L."/>
            <person name="Hillier L.W."/>
            <person name="Zody M.C."/>
            <person name="Goldstein S."/>
            <person name="She X."/>
            <person name="Bult C.J."/>
            <person name="Agarwala R."/>
            <person name="Cherry J.L."/>
            <person name="DiCuccio M."/>
            <person name="Hlavina W."/>
            <person name="Kapustin Y."/>
            <person name="Meric P."/>
            <person name="Maglott D."/>
            <person name="Birtle Z."/>
            <person name="Marques A.C."/>
            <person name="Graves T."/>
            <person name="Zhou S."/>
            <person name="Teague B."/>
            <person name="Potamousis K."/>
            <person name="Churas C."/>
            <person name="Place M."/>
            <person name="Herschleb J."/>
            <person name="Runnheim R."/>
            <person name="Forrest D."/>
            <person name="Amos-Landgraf J."/>
            <person name="Schwartz D.C."/>
            <person name="Cheng Z."/>
            <person name="Lindblad-Toh K."/>
            <person name="Eichler E.E."/>
            <person name="Ponting C.P."/>
        </authorList>
    </citation>
    <scope>NUCLEOTIDE SEQUENCE [LARGE SCALE GENOMIC DNA]</scope>
    <source>
        <strain>C57BL/6J</strain>
    </source>
</reference>
<reference key="2">
    <citation type="journal article" date="2004" name="Genome Res.">
        <title>The status, quality, and expansion of the NIH full-length cDNA project: the Mammalian Gene Collection (MGC).</title>
        <authorList>
            <consortium name="The MGC Project Team"/>
        </authorList>
    </citation>
    <scope>NUCLEOTIDE SEQUENCE [LARGE SCALE MRNA]</scope>
    <source>
        <strain>C57BL/6J</strain>
        <tissue>Thymus</tissue>
    </source>
</reference>
<reference key="3">
    <citation type="journal article" date="2014" name="J. Endocrinol.">
        <title>Gpr1 is an active chemerin receptor influencing glucose homeostasis in obese mice.</title>
        <authorList>
            <person name="Rourke J.L."/>
            <person name="Muruganandan S."/>
            <person name="Dranse H.J."/>
            <person name="McMullen N.M."/>
            <person name="Sinal C.J."/>
        </authorList>
    </citation>
    <scope>DISRUPTION PHENOTYPE</scope>
    <scope>FUNCTION</scope>
    <scope>TISSUE SPECIFICITY</scope>
</reference>
<reference key="4">
    <citation type="journal article" date="2018" name="FASEB J.">
        <title>FAM19A1 is a new ligand for GPR1 that modulates neural stem-cell proliferation and differentiation.</title>
        <authorList>
            <person name="Zheng C."/>
            <person name="Chen D."/>
            <person name="Zhang Y."/>
            <person name="Bai Y."/>
            <person name="Huang S."/>
            <person name="Zheng D."/>
            <person name="Liang W."/>
            <person name="She S."/>
            <person name="Peng X."/>
            <person name="Wang P."/>
            <person name="Mo X."/>
            <person name="Song Q."/>
            <person name="Lv P."/>
            <person name="Huang J."/>
            <person name="Ye R.D."/>
            <person name="Wang Y."/>
        </authorList>
    </citation>
    <scope>FUNCTION</scope>
    <scope>TISSUE SPECIFICITY</scope>
    <scope>SUBCELLULAR LOCATION</scope>
</reference>
<sequence>MEVSKEMLFEELDNYSYALDYYSQESDPEEKVYLGLVHWISLFLYALAFVLGIPGNAIVIWLMGFKWKKTVTTLWFLNLAIADFIFVLFLPLYISYVALSFHWPFGLWLCKVNSFIAQLNMFSSVFFLTVISLDRYIHLLHPGLSHRHRTLKSSLVVVILVWLLASLLGGPTLYFRDTMEVNNHIICYNNFQEHELTLMRHHVLTWVKFLFGYLFPLLTMSSCYLCLIFKMKKRNILISRKHLWMILSVVIAFLVCWTPYHLFSIWELSIHHNSSFQNVLQGGIPLSTGLAFLNSCLNPILYVLISKTFQARFRASVAEVLKRSLWEASCSGTVSEQLRSAETKSLSLLETAQ</sequence>
<comment type="function">
    <text evidence="4 5">Receptor for chemoattractant adipokine chemerin/RARRES2 suggesting a role for this receptor in the regulation of inflammation and energy homesotasis (PubMed:24895415). Signals mainly via beta-arrestin pathway. Binding of RARRES2 activates weakly G proteins, calcium mobilization and MAPK1/MAPK3 (ERK1/2) phosphorylation too. Acts also as a receptor for TAFA1, mediates its effects on neuronal stem-cell proliferation and differentiation via the activation of ROCK/ERK and ROCK/STAT3 signaling pathway (PubMed:29799787).</text>
</comment>
<comment type="subcellular location">
    <subcellularLocation>
        <location evidence="5">Cell membrane</location>
        <topology evidence="2">Multi-pass membrane protein</topology>
    </subcellularLocation>
    <text evidence="1 5">Internalizes in presence of its ligand, TAFA1 (PubMed:29799787). Internalizes efficiently in response to RARRES2 (By similarity).</text>
</comment>
<comment type="tissue specificity">
    <text evidence="4 5">High expressed in white adipose tissue and skeletal muscle (PubMed:24895415). Expressed in hippocampus and cortex (PubMed:29799787).</text>
</comment>
<comment type="disruption phenotype">
    <text evidence="4">Deficient mice have normal body weight, adipose development, and tissue inflammation under physiologic conditions. However, when fed on a high-fat diet, Cmklr2 knockout mice develop heightened glucose intolerance, compared with WT, with no effect on body weight, percent body fat, or energy expenditure due to consumption of significantly less food. Moreover, mice lacking Cmklr2 exhibited reduced glucose-stimulated insulin levels and elevated glucose levels in a pyruvate tolerance test.</text>
</comment>
<comment type="similarity">
    <text evidence="6">Belongs to the chemokine-like receptor (CMKLR) family.</text>
</comment>
<gene>
    <name type="primary">Cmklr2</name>
    <name evidence="7" type="synonym">Gpr1</name>
</gene>
<keyword id="KW-1003">Cell membrane</keyword>
<keyword id="KW-1015">Disulfide bond</keyword>
<keyword id="KW-0297">G-protein coupled receptor</keyword>
<keyword id="KW-0325">Glycoprotein</keyword>
<keyword id="KW-0472">Membrane</keyword>
<keyword id="KW-0675">Receptor</keyword>
<keyword id="KW-1185">Reference proteome</keyword>
<keyword id="KW-0807">Transducer</keyword>
<keyword id="KW-0812">Transmembrane</keyword>
<keyword id="KW-1133">Transmembrane helix</keyword>
<name>CML2_MOUSE</name>
<dbReference type="EMBL" id="AL645950">
    <property type="status" value="NOT_ANNOTATED_CDS"/>
    <property type="molecule type" value="Genomic_DNA"/>
</dbReference>
<dbReference type="EMBL" id="BC032934">
    <property type="protein sequence ID" value="AAH32934.1"/>
    <property type="molecule type" value="mRNA"/>
</dbReference>
<dbReference type="CCDS" id="CCDS14998.1"/>
<dbReference type="RefSeq" id="NP_001343974.1">
    <property type="nucleotide sequence ID" value="NM_001357045.2"/>
</dbReference>
<dbReference type="RefSeq" id="NP_666362.1">
    <property type="nucleotide sequence ID" value="NM_146250.3"/>
</dbReference>
<dbReference type="RefSeq" id="XP_006496043.1">
    <property type="nucleotide sequence ID" value="XM_006495980.2"/>
</dbReference>
<dbReference type="RefSeq" id="XP_006496044.1">
    <property type="nucleotide sequence ID" value="XM_006495981.4"/>
</dbReference>
<dbReference type="RefSeq" id="XP_011236820.1">
    <property type="nucleotide sequence ID" value="XM_011238518.2"/>
</dbReference>
<dbReference type="RefSeq" id="XP_011236821.1">
    <property type="nucleotide sequence ID" value="XM_011238519.2"/>
</dbReference>
<dbReference type="SMR" id="Q8K087"/>
<dbReference type="FunCoup" id="Q8K087">
    <property type="interactions" value="364"/>
</dbReference>
<dbReference type="STRING" id="10090.ENSMUSP00000051417"/>
<dbReference type="GlyCosmos" id="Q8K087">
    <property type="glycosylation" value="1 site, No reported glycans"/>
</dbReference>
<dbReference type="GlyGen" id="Q8K087">
    <property type="glycosylation" value="1 site"/>
</dbReference>
<dbReference type="PhosphoSitePlus" id="Q8K087"/>
<dbReference type="PaxDb" id="10090-ENSMUSP00000051417"/>
<dbReference type="Antibodypedia" id="1410">
    <property type="antibodies" value="229 antibodies from 31 providers"/>
</dbReference>
<dbReference type="DNASU" id="241070"/>
<dbReference type="Ensembl" id="ENSMUST00000050536.14">
    <property type="protein sequence ID" value="ENSMUSP00000051417.8"/>
    <property type="gene ID" value="ENSMUSG00000046856.14"/>
</dbReference>
<dbReference type="GeneID" id="241070"/>
<dbReference type="KEGG" id="mmu:241070"/>
<dbReference type="UCSC" id="uc007bga.3">
    <property type="organism name" value="mouse"/>
</dbReference>
<dbReference type="AGR" id="MGI:2385324"/>
<dbReference type="CTD" id="2825"/>
<dbReference type="MGI" id="MGI:2385324">
    <property type="gene designation" value="Cmklr2"/>
</dbReference>
<dbReference type="VEuPathDB" id="HostDB:ENSMUSG00000046856"/>
<dbReference type="eggNOG" id="KOG3656">
    <property type="taxonomic scope" value="Eukaryota"/>
</dbReference>
<dbReference type="GeneTree" id="ENSGT00940000160642"/>
<dbReference type="HOGENOM" id="CLU_009579_8_0_1"/>
<dbReference type="InParanoid" id="Q8K087"/>
<dbReference type="OMA" id="ISSKHFW"/>
<dbReference type="OrthoDB" id="6088892at2759"/>
<dbReference type="PhylomeDB" id="Q8K087"/>
<dbReference type="TreeFam" id="TF330976"/>
<dbReference type="BioGRID-ORCS" id="241070">
    <property type="hits" value="2 hits in 76 CRISPR screens"/>
</dbReference>
<dbReference type="ChiTaRS" id="Gpr1">
    <property type="organism name" value="mouse"/>
</dbReference>
<dbReference type="PRO" id="PR:Q8K087"/>
<dbReference type="Proteomes" id="UP000000589">
    <property type="component" value="Chromosome 1"/>
</dbReference>
<dbReference type="RNAct" id="Q8K087">
    <property type="molecule type" value="protein"/>
</dbReference>
<dbReference type="Bgee" id="ENSMUSG00000046856">
    <property type="expression patterns" value="Expressed in primary oocyte and 60 other cell types or tissues"/>
</dbReference>
<dbReference type="GO" id="GO:0005654">
    <property type="term" value="C:nucleoplasm"/>
    <property type="evidence" value="ECO:0007669"/>
    <property type="project" value="Ensembl"/>
</dbReference>
<dbReference type="GO" id="GO:0005886">
    <property type="term" value="C:plasma membrane"/>
    <property type="evidence" value="ECO:0000250"/>
    <property type="project" value="UniProtKB"/>
</dbReference>
<dbReference type="GO" id="GO:0097004">
    <property type="term" value="F:adipokinetic hormone binding"/>
    <property type="evidence" value="ECO:0000250"/>
    <property type="project" value="UniProtKB"/>
</dbReference>
<dbReference type="GO" id="GO:0097003">
    <property type="term" value="F:adipokinetic hormone receptor activity"/>
    <property type="evidence" value="ECO:0000250"/>
    <property type="project" value="UniProtKB"/>
</dbReference>
<dbReference type="GO" id="GO:0004930">
    <property type="term" value="F:G protein-coupled receptor activity"/>
    <property type="evidence" value="ECO:0007669"/>
    <property type="project" value="UniProtKB-KW"/>
</dbReference>
<dbReference type="GO" id="GO:0042593">
    <property type="term" value="P:glucose homeostasis"/>
    <property type="evidence" value="ECO:0000315"/>
    <property type="project" value="UniProtKB"/>
</dbReference>
<dbReference type="CDD" id="cd15119">
    <property type="entry name" value="7tmA_GPR1"/>
    <property type="match status" value="1"/>
</dbReference>
<dbReference type="FunFam" id="1.20.1070.10:FF:000034">
    <property type="entry name" value="G-protein coupled receptor 1"/>
    <property type="match status" value="1"/>
</dbReference>
<dbReference type="Gene3D" id="1.20.1070.10">
    <property type="entry name" value="Rhodopsin 7-helix transmembrane proteins"/>
    <property type="match status" value="1"/>
</dbReference>
<dbReference type="InterPro" id="IPR002275">
    <property type="entry name" value="CML2"/>
</dbReference>
<dbReference type="InterPro" id="IPR000826">
    <property type="entry name" value="Formyl_rcpt-rel"/>
</dbReference>
<dbReference type="InterPro" id="IPR000276">
    <property type="entry name" value="GPCR_Rhodpsn"/>
</dbReference>
<dbReference type="InterPro" id="IPR017452">
    <property type="entry name" value="GPCR_Rhodpsn_7TM"/>
</dbReference>
<dbReference type="PANTHER" id="PTHR24225:SF74">
    <property type="entry name" value="CHEMOKINE-LIKE RECEPTOR 1"/>
    <property type="match status" value="1"/>
</dbReference>
<dbReference type="PANTHER" id="PTHR24225">
    <property type="entry name" value="CHEMOTACTIC RECEPTOR"/>
    <property type="match status" value="1"/>
</dbReference>
<dbReference type="Pfam" id="PF00001">
    <property type="entry name" value="7tm_1"/>
    <property type="match status" value="1"/>
</dbReference>
<dbReference type="PRINTS" id="PR00237">
    <property type="entry name" value="GPCRRHODOPSN"/>
</dbReference>
<dbReference type="PRINTS" id="PR01146">
    <property type="entry name" value="GPR1ORPHANR"/>
</dbReference>
<dbReference type="SUPFAM" id="SSF81321">
    <property type="entry name" value="Family A G protein-coupled receptor-like"/>
    <property type="match status" value="1"/>
</dbReference>
<dbReference type="PROSITE" id="PS00237">
    <property type="entry name" value="G_PROTEIN_RECEP_F1_1"/>
    <property type="match status" value="1"/>
</dbReference>
<dbReference type="PROSITE" id="PS50262">
    <property type="entry name" value="G_PROTEIN_RECEP_F1_2"/>
    <property type="match status" value="1"/>
</dbReference>
<evidence type="ECO:0000250" key="1">
    <source>
        <dbReference type="UniProtKB" id="P46091"/>
    </source>
</evidence>
<evidence type="ECO:0000255" key="2"/>
<evidence type="ECO:0000255" key="3">
    <source>
        <dbReference type="PROSITE-ProRule" id="PRU00521"/>
    </source>
</evidence>
<evidence type="ECO:0000269" key="4">
    <source>
    </source>
</evidence>
<evidence type="ECO:0000269" key="5">
    <source>
    </source>
</evidence>
<evidence type="ECO:0000305" key="6"/>
<evidence type="ECO:0000312" key="7">
    <source>
        <dbReference type="MGI" id="MGI:2385324"/>
    </source>
</evidence>
<proteinExistence type="evidence at transcript level"/>
<organism>
    <name type="scientific">Mus musculus</name>
    <name type="common">Mouse</name>
    <dbReference type="NCBI Taxonomy" id="10090"/>
    <lineage>
        <taxon>Eukaryota</taxon>
        <taxon>Metazoa</taxon>
        <taxon>Chordata</taxon>
        <taxon>Craniata</taxon>
        <taxon>Vertebrata</taxon>
        <taxon>Euteleostomi</taxon>
        <taxon>Mammalia</taxon>
        <taxon>Eutheria</taxon>
        <taxon>Euarchontoglires</taxon>
        <taxon>Glires</taxon>
        <taxon>Rodentia</taxon>
        <taxon>Myomorpha</taxon>
        <taxon>Muroidea</taxon>
        <taxon>Muridae</taxon>
        <taxon>Murinae</taxon>
        <taxon>Mus</taxon>
        <taxon>Mus</taxon>
    </lineage>
</organism>
<feature type="chain" id="PRO_0000069508" description="Chemerin-like receptor 2">
    <location>
        <begin position="1"/>
        <end position="353"/>
    </location>
</feature>
<feature type="topological domain" description="Extracellular" evidence="2">
    <location>
        <begin position="1"/>
        <end position="41"/>
    </location>
</feature>
<feature type="transmembrane region" description="Helical; Name=1" evidence="2">
    <location>
        <begin position="42"/>
        <end position="62"/>
    </location>
</feature>
<feature type="topological domain" description="Cytoplasmic" evidence="2">
    <location>
        <begin position="63"/>
        <end position="73"/>
    </location>
</feature>
<feature type="transmembrane region" description="Helical; Name=2" evidence="2">
    <location>
        <begin position="74"/>
        <end position="94"/>
    </location>
</feature>
<feature type="topological domain" description="Extracellular" evidence="2">
    <location>
        <begin position="95"/>
        <end position="112"/>
    </location>
</feature>
<feature type="transmembrane region" description="Helical; Name=3" evidence="2">
    <location>
        <begin position="113"/>
        <end position="133"/>
    </location>
</feature>
<feature type="topological domain" description="Cytoplasmic" evidence="2">
    <location>
        <begin position="134"/>
        <end position="154"/>
    </location>
</feature>
<feature type="transmembrane region" description="Helical; Name=4" evidence="2">
    <location>
        <begin position="155"/>
        <end position="175"/>
    </location>
</feature>
<feature type="topological domain" description="Extracellular" evidence="2">
    <location>
        <begin position="176"/>
        <end position="210"/>
    </location>
</feature>
<feature type="transmembrane region" description="Helical; Name=5" evidence="2">
    <location>
        <begin position="211"/>
        <end position="231"/>
    </location>
</feature>
<feature type="topological domain" description="Cytoplasmic" evidence="2">
    <location>
        <begin position="232"/>
        <end position="247"/>
    </location>
</feature>
<feature type="transmembrane region" description="Helical; Name=6" evidence="2">
    <location>
        <begin position="248"/>
        <end position="268"/>
    </location>
</feature>
<feature type="topological domain" description="Extracellular" evidence="2">
    <location>
        <begin position="269"/>
        <end position="286"/>
    </location>
</feature>
<feature type="transmembrane region" description="Helical; Name=7" evidence="2">
    <location>
        <begin position="287"/>
        <end position="307"/>
    </location>
</feature>
<feature type="topological domain" description="Cytoplasmic" evidence="2">
    <location>
        <begin position="308"/>
        <end position="353"/>
    </location>
</feature>
<feature type="glycosylation site" description="N-linked (GlcNAc...) asparagine" evidence="2">
    <location>
        <position position="14"/>
    </location>
</feature>
<feature type="disulfide bond" evidence="3">
    <location>
        <begin position="110"/>
        <end position="187"/>
    </location>
</feature>
<accession>Q8K087</accession>